<dbReference type="EMBL" id="AF412334">
    <property type="protein sequence ID" value="AAL60162.1"/>
    <property type="molecule type" value="mRNA"/>
</dbReference>
<dbReference type="EMBL" id="AF467453">
    <property type="protein sequence ID" value="AAL77007.1"/>
    <property type="molecule type" value="mRNA"/>
</dbReference>
<dbReference type="RefSeq" id="NP_543171.1">
    <molecule id="Q8R5H8-2"/>
    <property type="nucleotide sequence ID" value="NM_080895.2"/>
</dbReference>
<dbReference type="RefSeq" id="XP_002730005.1">
    <molecule id="Q8R5H8-1"/>
    <property type="nucleotide sequence ID" value="XM_002729959.6"/>
</dbReference>
<dbReference type="RefSeq" id="XP_006243673.1">
    <molecule id="Q8R5H8-1"/>
    <property type="nucleotide sequence ID" value="XM_006243611.5"/>
</dbReference>
<dbReference type="RefSeq" id="XP_006243675.1">
    <property type="nucleotide sequence ID" value="XM_006243613.2"/>
</dbReference>
<dbReference type="RefSeq" id="XP_006243676.1">
    <property type="nucleotide sequence ID" value="XM_006243614.3"/>
</dbReference>
<dbReference type="RefSeq" id="XP_006243678.1">
    <property type="nucleotide sequence ID" value="XM_006243616.3"/>
</dbReference>
<dbReference type="RefSeq" id="XP_006243679.1">
    <property type="nucleotide sequence ID" value="XM_006243617.3"/>
</dbReference>
<dbReference type="RefSeq" id="XP_006243681.1">
    <property type="nucleotide sequence ID" value="XM_006243619.3"/>
</dbReference>
<dbReference type="RefSeq" id="XP_017450913.1">
    <property type="nucleotide sequence ID" value="XM_017595424.1"/>
</dbReference>
<dbReference type="RefSeq" id="XP_017451611.1">
    <property type="nucleotide sequence ID" value="XM_017596122.1"/>
</dbReference>
<dbReference type="RefSeq" id="XP_063120871.1">
    <molecule id="Q8R5H8-2"/>
    <property type="nucleotide sequence ID" value="XM_063264801.1"/>
</dbReference>
<dbReference type="SMR" id="Q8R5H8"/>
<dbReference type="BioGRID" id="250864">
    <property type="interactions" value="1"/>
</dbReference>
<dbReference type="FunCoup" id="Q8R5H8">
    <property type="interactions" value="1981"/>
</dbReference>
<dbReference type="STRING" id="10116.ENSRNOP00000039749"/>
<dbReference type="PhosphoSitePlus" id="Q8R5H8"/>
<dbReference type="PaxDb" id="10116-ENSRNOP00000039749"/>
<dbReference type="Ensembl" id="ENSRNOT00000045821.4">
    <molecule id="Q8R5H8-1"/>
    <property type="protein sequence ID" value="ENSRNOP00000039749.2"/>
    <property type="gene ID" value="ENSRNOG00000030069.6"/>
</dbReference>
<dbReference type="Ensembl" id="ENSRNOT00000047613.5">
    <molecule id="Q8R5H8-2"/>
    <property type="protein sequence ID" value="ENSRNOP00000049149.3"/>
    <property type="gene ID" value="ENSRNOG00000030069.6"/>
</dbReference>
<dbReference type="GeneID" id="140930"/>
<dbReference type="KEGG" id="rno:140930"/>
<dbReference type="UCSC" id="RGD:620572">
    <molecule id="Q8R5H8-1"/>
    <property type="organism name" value="rat"/>
</dbReference>
<dbReference type="AGR" id="RGD:620572"/>
<dbReference type="CTD" id="55179"/>
<dbReference type="RGD" id="620572">
    <property type="gene designation" value="Faim"/>
</dbReference>
<dbReference type="VEuPathDB" id="HostDB:ENSRNOG00000048802"/>
<dbReference type="eggNOG" id="KOG4352">
    <property type="taxonomic scope" value="Eukaryota"/>
</dbReference>
<dbReference type="GeneTree" id="ENSGT00390000007364"/>
<dbReference type="HOGENOM" id="CLU_109086_0_0_1"/>
<dbReference type="InParanoid" id="Q8R5H8"/>
<dbReference type="OMA" id="SQEYRIM"/>
<dbReference type="OrthoDB" id="6262731at2759"/>
<dbReference type="PhylomeDB" id="Q8R5H8"/>
<dbReference type="TreeFam" id="TF314971"/>
<dbReference type="PRO" id="PR:Q8R5H8"/>
<dbReference type="Proteomes" id="UP000002494">
    <property type="component" value="Chromosome 8"/>
</dbReference>
<dbReference type="Bgee" id="ENSRNOG00000030069">
    <property type="expression patterns" value="Expressed in thymus and 16 other cell types or tissues"/>
</dbReference>
<dbReference type="GO" id="GO:0005737">
    <property type="term" value="C:cytoplasm"/>
    <property type="evidence" value="ECO:0007669"/>
    <property type="project" value="UniProtKB-SubCell"/>
</dbReference>
<dbReference type="GO" id="GO:0006915">
    <property type="term" value="P:apoptotic process"/>
    <property type="evidence" value="ECO:0007669"/>
    <property type="project" value="UniProtKB-KW"/>
</dbReference>
<dbReference type="GO" id="GO:1902042">
    <property type="term" value="P:negative regulation of extrinsic apoptotic signaling pathway via death domain receptors"/>
    <property type="evidence" value="ECO:0000266"/>
    <property type="project" value="RGD"/>
</dbReference>
<dbReference type="GO" id="GO:0043123">
    <property type="term" value="P:positive regulation of canonical NF-kappaB signal transduction"/>
    <property type="evidence" value="ECO:0000315"/>
    <property type="project" value="RGD"/>
</dbReference>
<dbReference type="GO" id="GO:0050769">
    <property type="term" value="P:positive regulation of neurogenesis"/>
    <property type="evidence" value="ECO:0000315"/>
    <property type="project" value="RGD"/>
</dbReference>
<dbReference type="FunFam" id="2.40.128.180:FF:000001">
    <property type="entry name" value="Fas apoptotic inhibitory molecule 1"/>
    <property type="match status" value="1"/>
</dbReference>
<dbReference type="FunFam" id="2.40.128.180:FF:000002">
    <property type="entry name" value="Fas apoptotic inhibitory molecule 1"/>
    <property type="match status" value="1"/>
</dbReference>
<dbReference type="Gene3D" id="2.40.128.180">
    <property type="match status" value="2"/>
</dbReference>
<dbReference type="InterPro" id="IPR010695">
    <property type="entry name" value="FAIM1"/>
</dbReference>
<dbReference type="InterPro" id="IPR038513">
    <property type="entry name" value="FAIM1_dom_sf"/>
</dbReference>
<dbReference type="PANTHER" id="PTHR13088:SF4">
    <property type="entry name" value="FAS APOPTOTIC INHIBITORY MOLECULE 1"/>
    <property type="match status" value="1"/>
</dbReference>
<dbReference type="PANTHER" id="PTHR13088">
    <property type="entry name" value="FAS APOPTOTIC INHIBITORY MOLECULE FAIM"/>
    <property type="match status" value="1"/>
</dbReference>
<dbReference type="Pfam" id="PF06905">
    <property type="entry name" value="FAIM1"/>
    <property type="match status" value="1"/>
</dbReference>
<keyword id="KW-0025">Alternative splicing</keyword>
<keyword id="KW-0053">Apoptosis</keyword>
<keyword id="KW-0963">Cytoplasm</keyword>
<keyword id="KW-1185">Reference proteome</keyword>
<reference key="1">
    <citation type="submission" date="2001-08" db="EMBL/GenBank/DDBJ databases">
        <title>Cloning and characterization of rat Fas-apoptosis inhibitory molecule (rFAIM).</title>
        <authorList>
            <person name="Sole C."/>
            <person name="Yuste V.J."/>
            <person name="Bayascas J.R."/>
            <person name="Espinet C."/>
            <person name="Comella J.X."/>
        </authorList>
    </citation>
    <scope>NUCLEOTIDE SEQUENCE [MRNA] (ISOFORMS 1 AND 2)</scope>
    <source>
        <strain>Sprague-Dawley</strain>
        <tissue>Heart</tissue>
    </source>
</reference>
<feature type="chain" id="PRO_0000087175" description="Fas apoptotic inhibitory molecule 1">
    <location>
        <begin position="1"/>
        <end position="201"/>
    </location>
</feature>
<feature type="splice variant" id="VSP_008993" description="In isoform 2." evidence="2">
    <location>
        <begin position="1"/>
        <end position="22"/>
    </location>
</feature>
<proteinExistence type="evidence at transcript level"/>
<organism>
    <name type="scientific">Rattus norvegicus</name>
    <name type="common">Rat</name>
    <dbReference type="NCBI Taxonomy" id="10116"/>
    <lineage>
        <taxon>Eukaryota</taxon>
        <taxon>Metazoa</taxon>
        <taxon>Chordata</taxon>
        <taxon>Craniata</taxon>
        <taxon>Vertebrata</taxon>
        <taxon>Euteleostomi</taxon>
        <taxon>Mammalia</taxon>
        <taxon>Eutheria</taxon>
        <taxon>Euarchontoglires</taxon>
        <taxon>Glires</taxon>
        <taxon>Rodentia</taxon>
        <taxon>Myomorpha</taxon>
        <taxon>Muroidea</taxon>
        <taxon>Muridae</taxon>
        <taxon>Murinae</taxon>
        <taxon>Rattus</taxon>
    </lineage>
</organism>
<comment type="function">
    <text evidence="1">Plays a role as an inducible effector molecule that mediates Fas resistance produced by surface Ig engagement in B cells.</text>
</comment>
<comment type="subcellular location">
    <subcellularLocation>
        <location evidence="1">Cytoplasm</location>
    </subcellularLocation>
</comment>
<comment type="alternative products">
    <event type="alternative splicing"/>
    <isoform>
        <id>Q8R5H8-1</id>
        <name>1</name>
        <name>Long</name>
        <name>FAIM-L</name>
        <sequence type="displayed"/>
    </isoform>
    <isoform>
        <id>Q8R5H8-2</id>
        <name>2</name>
        <name>Short</name>
        <name>FAIM-S</name>
        <sequence type="described" ref="VSP_008993"/>
    </isoform>
</comment>
<comment type="similarity">
    <text evidence="3">Belongs to the FAIM1 family.</text>
</comment>
<protein>
    <recommendedName>
        <fullName>Fas apoptotic inhibitory molecule 1</fullName>
        <shortName>rFAIM</shortName>
    </recommendedName>
</protein>
<sequence>MASGDDSPIFEDDESPLCSLEKMTDLVAVWDVALSDGVHKIEFEHGTTSGKRVVYVDGKEEIRREWMFKLVGKETFFVGAAKTKATINIDAISGFAYEYTLEIDGKSLKKYMENRSKTTNTWVLHLDGEELRVVLEKDTMDVWCNGQRMETAGEFVDDGTETHFSVGNHDCYIKAVSSGKRREGIIHTLIVDNREIPELTQ</sequence>
<accession>Q8R5H8</accession>
<accession>Q8VHR4</accession>
<gene>
    <name type="primary">Faim</name>
    <name type="synonym">Faim1</name>
</gene>
<name>FAIM1_RAT</name>
<evidence type="ECO:0000250" key="1"/>
<evidence type="ECO:0000303" key="2">
    <source ref="1"/>
</evidence>
<evidence type="ECO:0000305" key="3"/>